<name>LACG_STAAM</name>
<proteinExistence type="inferred from homology"/>
<keyword id="KW-0326">Glycosidase</keyword>
<keyword id="KW-0378">Hydrolase</keyword>
<protein>
    <recommendedName>
        <fullName evidence="1">6-phospho-beta-galactosidase</fullName>
        <ecNumber evidence="1">3.2.1.85</ecNumber>
    </recommendedName>
    <alternativeName>
        <fullName evidence="1">Beta-D-phosphogalactoside galactohydrolase</fullName>
        <shortName evidence="1">PGALase</shortName>
    </alternativeName>
    <alternativeName>
        <fullName evidence="1">P-beta-Gal</fullName>
        <shortName evidence="1">PBG</shortName>
    </alternativeName>
</protein>
<accession>P67767</accession>
<accession>Q99S78</accession>
<gene>
    <name evidence="1" type="primary">lacG</name>
    <name type="ordered locus">SAV2189</name>
</gene>
<reference key="1">
    <citation type="journal article" date="2001" name="Lancet">
        <title>Whole genome sequencing of meticillin-resistant Staphylococcus aureus.</title>
        <authorList>
            <person name="Kuroda M."/>
            <person name="Ohta T."/>
            <person name="Uchiyama I."/>
            <person name="Baba T."/>
            <person name="Yuzawa H."/>
            <person name="Kobayashi I."/>
            <person name="Cui L."/>
            <person name="Oguchi A."/>
            <person name="Aoki K."/>
            <person name="Nagai Y."/>
            <person name="Lian J.-Q."/>
            <person name="Ito T."/>
            <person name="Kanamori M."/>
            <person name="Matsumaru H."/>
            <person name="Maruyama A."/>
            <person name="Murakami H."/>
            <person name="Hosoyama A."/>
            <person name="Mizutani-Ui Y."/>
            <person name="Takahashi N.K."/>
            <person name="Sawano T."/>
            <person name="Inoue R."/>
            <person name="Kaito C."/>
            <person name="Sekimizu K."/>
            <person name="Hirakawa H."/>
            <person name="Kuhara S."/>
            <person name="Goto S."/>
            <person name="Yabuzaki J."/>
            <person name="Kanehisa M."/>
            <person name="Yamashita A."/>
            <person name="Oshima K."/>
            <person name="Furuya K."/>
            <person name="Yoshino C."/>
            <person name="Shiba T."/>
            <person name="Hattori M."/>
            <person name="Ogasawara N."/>
            <person name="Hayashi H."/>
            <person name="Hiramatsu K."/>
        </authorList>
    </citation>
    <scope>NUCLEOTIDE SEQUENCE [LARGE SCALE GENOMIC DNA]</scope>
    <source>
        <strain>Mu50 / ATCC 700699</strain>
    </source>
</reference>
<feature type="chain" id="PRO_0000063885" description="6-phospho-beta-galactosidase">
    <location>
        <begin position="1"/>
        <end position="470"/>
    </location>
</feature>
<feature type="active site" description="Proton donor" evidence="1">
    <location>
        <position position="160"/>
    </location>
</feature>
<feature type="active site" description="Nucleophile" evidence="1">
    <location>
        <position position="375"/>
    </location>
</feature>
<feature type="binding site" evidence="1">
    <location>
        <position position="19"/>
    </location>
    <ligand>
        <name>D-galactose 6-phosphate</name>
        <dbReference type="ChEBI" id="CHEBI:91004"/>
    </ligand>
</feature>
<feature type="binding site" evidence="1">
    <location>
        <position position="116"/>
    </location>
    <ligand>
        <name>D-galactose 6-phosphate</name>
        <dbReference type="ChEBI" id="CHEBI:91004"/>
    </ligand>
</feature>
<feature type="binding site" evidence="1">
    <location>
        <position position="159"/>
    </location>
    <ligand>
        <name>D-galactose 6-phosphate</name>
        <dbReference type="ChEBI" id="CHEBI:91004"/>
    </ligand>
</feature>
<feature type="binding site" evidence="1">
    <location>
        <position position="160"/>
    </location>
    <ligand>
        <name>D-galactose 6-phosphate</name>
        <dbReference type="ChEBI" id="CHEBI:91004"/>
    </ligand>
</feature>
<feature type="binding site" evidence="1">
    <location>
        <position position="297"/>
    </location>
    <ligand>
        <name>D-galactose 6-phosphate</name>
        <dbReference type="ChEBI" id="CHEBI:91004"/>
    </ligand>
</feature>
<feature type="binding site" evidence="1">
    <location>
        <position position="430"/>
    </location>
    <ligand>
        <name>D-galactose 6-phosphate</name>
        <dbReference type="ChEBI" id="CHEBI:91004"/>
    </ligand>
</feature>
<feature type="binding site" evidence="1">
    <location>
        <position position="431"/>
    </location>
    <ligand>
        <name>D-galactose 6-phosphate</name>
        <dbReference type="ChEBI" id="CHEBI:91004"/>
    </ligand>
</feature>
<feature type="binding site" evidence="1">
    <location>
        <position position="437"/>
    </location>
    <ligand>
        <name>D-galactose 6-phosphate</name>
        <dbReference type="ChEBI" id="CHEBI:91004"/>
    </ligand>
</feature>
<feature type="binding site" evidence="1">
    <location>
        <position position="439"/>
    </location>
    <ligand>
        <name>D-galactose 6-phosphate</name>
        <dbReference type="ChEBI" id="CHEBI:91004"/>
    </ligand>
</feature>
<comment type="catalytic activity">
    <reaction evidence="1">
        <text>a 6-phospho-beta-D-galactoside + H2O = D-galactose 6-phosphate + an alcohol</text>
        <dbReference type="Rhea" id="RHEA:24568"/>
        <dbReference type="ChEBI" id="CHEBI:15377"/>
        <dbReference type="ChEBI" id="CHEBI:30879"/>
        <dbReference type="ChEBI" id="CHEBI:58534"/>
        <dbReference type="ChEBI" id="CHEBI:91004"/>
        <dbReference type="EC" id="3.2.1.85"/>
    </reaction>
</comment>
<comment type="pathway">
    <text evidence="1">Carbohydrate metabolism; lactose degradation; D-galactose 6-phosphate and beta-D-glucose from lactose 6-phosphate: step 1/1.</text>
</comment>
<comment type="similarity">
    <text evidence="1">Belongs to the glycosyl hydrolase 1 family.</text>
</comment>
<dbReference type="EC" id="3.2.1.85" evidence="1"/>
<dbReference type="EMBL" id="BA000017">
    <property type="protein sequence ID" value="BAB58351.1"/>
    <property type="molecule type" value="Genomic_DNA"/>
</dbReference>
<dbReference type="RefSeq" id="WP_000169224.1">
    <property type="nucleotide sequence ID" value="NC_002758.2"/>
</dbReference>
<dbReference type="SMR" id="P67767"/>
<dbReference type="KEGG" id="sav:SAV2189"/>
<dbReference type="HOGENOM" id="CLU_001859_1_3_9"/>
<dbReference type="PhylomeDB" id="P67767"/>
<dbReference type="UniPathway" id="UPA00542">
    <property type="reaction ID" value="UER00605"/>
</dbReference>
<dbReference type="Proteomes" id="UP000002481">
    <property type="component" value="Chromosome"/>
</dbReference>
<dbReference type="GO" id="GO:0005829">
    <property type="term" value="C:cytosol"/>
    <property type="evidence" value="ECO:0007669"/>
    <property type="project" value="TreeGrafter"/>
</dbReference>
<dbReference type="GO" id="GO:0033920">
    <property type="term" value="F:6-phospho-beta-galactosidase activity"/>
    <property type="evidence" value="ECO:0007669"/>
    <property type="project" value="UniProtKB-UniRule"/>
</dbReference>
<dbReference type="GO" id="GO:0008422">
    <property type="term" value="F:beta-glucosidase activity"/>
    <property type="evidence" value="ECO:0007669"/>
    <property type="project" value="TreeGrafter"/>
</dbReference>
<dbReference type="GO" id="GO:0019512">
    <property type="term" value="P:lactose catabolic process via tagatose-6-phosphate"/>
    <property type="evidence" value="ECO:0007669"/>
    <property type="project" value="InterPro"/>
</dbReference>
<dbReference type="FunFam" id="3.20.20.80:FF:000004">
    <property type="entry name" value="Beta-glucosidase 6-phospho-beta-glucosidase"/>
    <property type="match status" value="1"/>
</dbReference>
<dbReference type="Gene3D" id="3.20.20.80">
    <property type="entry name" value="Glycosidases"/>
    <property type="match status" value="1"/>
</dbReference>
<dbReference type="HAMAP" id="MF_01574">
    <property type="entry name" value="LacG"/>
    <property type="match status" value="1"/>
</dbReference>
<dbReference type="InterPro" id="IPR005928">
    <property type="entry name" value="6P-beta-galactosidase"/>
</dbReference>
<dbReference type="InterPro" id="IPR001360">
    <property type="entry name" value="Glyco_hydro_1"/>
</dbReference>
<dbReference type="InterPro" id="IPR018120">
    <property type="entry name" value="Glyco_hydro_1_AS"/>
</dbReference>
<dbReference type="InterPro" id="IPR033132">
    <property type="entry name" value="Glyco_hydro_1_N_CS"/>
</dbReference>
<dbReference type="InterPro" id="IPR017853">
    <property type="entry name" value="Glycoside_hydrolase_SF"/>
</dbReference>
<dbReference type="NCBIfam" id="TIGR01233">
    <property type="entry name" value="lacG"/>
    <property type="match status" value="1"/>
</dbReference>
<dbReference type="NCBIfam" id="NF010036">
    <property type="entry name" value="PRK13511.1"/>
    <property type="match status" value="1"/>
</dbReference>
<dbReference type="PANTHER" id="PTHR10353">
    <property type="entry name" value="GLYCOSYL HYDROLASE"/>
    <property type="match status" value="1"/>
</dbReference>
<dbReference type="PANTHER" id="PTHR10353:SF36">
    <property type="entry name" value="LP05116P"/>
    <property type="match status" value="1"/>
</dbReference>
<dbReference type="Pfam" id="PF00232">
    <property type="entry name" value="Glyco_hydro_1"/>
    <property type="match status" value="1"/>
</dbReference>
<dbReference type="PRINTS" id="PR00131">
    <property type="entry name" value="GLHYDRLASE1"/>
</dbReference>
<dbReference type="SUPFAM" id="SSF51445">
    <property type="entry name" value="(Trans)glycosidases"/>
    <property type="match status" value="1"/>
</dbReference>
<dbReference type="PROSITE" id="PS00572">
    <property type="entry name" value="GLYCOSYL_HYDROL_F1_1"/>
    <property type="match status" value="1"/>
</dbReference>
<dbReference type="PROSITE" id="PS00653">
    <property type="entry name" value="GLYCOSYL_HYDROL_F1_2"/>
    <property type="match status" value="1"/>
</dbReference>
<organism>
    <name type="scientific">Staphylococcus aureus (strain Mu50 / ATCC 700699)</name>
    <dbReference type="NCBI Taxonomy" id="158878"/>
    <lineage>
        <taxon>Bacteria</taxon>
        <taxon>Bacillati</taxon>
        <taxon>Bacillota</taxon>
        <taxon>Bacilli</taxon>
        <taxon>Bacillales</taxon>
        <taxon>Staphylococcaceae</taxon>
        <taxon>Staphylococcus</taxon>
    </lineage>
</organism>
<evidence type="ECO:0000255" key="1">
    <source>
        <dbReference type="HAMAP-Rule" id="MF_01574"/>
    </source>
</evidence>
<sequence>MTKTLPEDFIFGGATAAYQAEGATNTDGKGRVAWDTYLEENYWYTAEPASDFYNRYPVDLELSEKFGVNGIRISIAWSRIFPNGYGEVNPKGVEYYHKLFAECHKRHVEPFVTLHHFDTPEVLHKDGDFLNRKTIDYFVDYAEYCFKEFPEVKYWTTFNEIGPIGDGQYLVGKFPPGIKYDFEKVFQSHHNMMVAHARAVKLFKDGGYQGEIGVVHALPTKYPFDPSNPEDVRAAELEDIIHNKFILDATYLGKYSRETMEGVQHILSVNGGKLNITDEDYAILDAAKDLNDFLGINYYMSDWMRGYDGESEITHNATGDKGGSKYQLKGVGQREFDVDVPRTDWDWMIYPQGLYDQIMRVVKDYPNYHKIYITENGLGYKDEFIESEKTVHDDARIDYVRQHLNVIADAIKDGANVKGYFIWSLMDVFSWSNGYEKRYGLFYVDFETQERYPKKSAYWYKELAETKEIK</sequence>